<name>RIMO_BORBR</name>
<organism>
    <name type="scientific">Bordetella bronchiseptica (strain ATCC BAA-588 / NCTC 13252 / RB50)</name>
    <name type="common">Alcaligenes bronchisepticus</name>
    <dbReference type="NCBI Taxonomy" id="257310"/>
    <lineage>
        <taxon>Bacteria</taxon>
        <taxon>Pseudomonadati</taxon>
        <taxon>Pseudomonadota</taxon>
        <taxon>Betaproteobacteria</taxon>
        <taxon>Burkholderiales</taxon>
        <taxon>Alcaligenaceae</taxon>
        <taxon>Bordetella</taxon>
    </lineage>
</organism>
<feature type="chain" id="PRO_0000374713" description="Ribosomal protein uS12 methylthiotransferase RimO">
    <location>
        <begin position="1"/>
        <end position="439"/>
    </location>
</feature>
<feature type="domain" description="MTTase N-terminal" evidence="2">
    <location>
        <begin position="4"/>
        <end position="114"/>
    </location>
</feature>
<feature type="domain" description="Radical SAM core" evidence="3">
    <location>
        <begin position="133"/>
        <end position="370"/>
    </location>
</feature>
<feature type="domain" description="TRAM" evidence="2">
    <location>
        <begin position="373"/>
        <end position="439"/>
    </location>
</feature>
<feature type="binding site" evidence="2">
    <location>
        <position position="147"/>
    </location>
    <ligand>
        <name>[4Fe-4S] cluster</name>
        <dbReference type="ChEBI" id="CHEBI:49883"/>
        <note>4Fe-4S-S-AdoMet</note>
    </ligand>
</feature>
<feature type="binding site" evidence="2">
    <location>
        <position position="151"/>
    </location>
    <ligand>
        <name>[4Fe-4S] cluster</name>
        <dbReference type="ChEBI" id="CHEBI:49883"/>
        <note>4Fe-4S-S-AdoMet</note>
    </ligand>
</feature>
<feature type="binding site" evidence="2">
    <location>
        <position position="154"/>
    </location>
    <ligand>
        <name>[4Fe-4S] cluster</name>
        <dbReference type="ChEBI" id="CHEBI:49883"/>
        <note>4Fe-4S-S-AdoMet</note>
    </ligand>
</feature>
<reference key="1">
    <citation type="journal article" date="2003" name="Nat. Genet.">
        <title>Comparative analysis of the genome sequences of Bordetella pertussis, Bordetella parapertussis and Bordetella bronchiseptica.</title>
        <authorList>
            <person name="Parkhill J."/>
            <person name="Sebaihia M."/>
            <person name="Preston A."/>
            <person name="Murphy L.D."/>
            <person name="Thomson N.R."/>
            <person name="Harris D.E."/>
            <person name="Holden M.T.G."/>
            <person name="Churcher C.M."/>
            <person name="Bentley S.D."/>
            <person name="Mungall K.L."/>
            <person name="Cerdeno-Tarraga A.-M."/>
            <person name="Temple L."/>
            <person name="James K.D."/>
            <person name="Harris B."/>
            <person name="Quail M.A."/>
            <person name="Achtman M."/>
            <person name="Atkin R."/>
            <person name="Baker S."/>
            <person name="Basham D."/>
            <person name="Bason N."/>
            <person name="Cherevach I."/>
            <person name="Chillingworth T."/>
            <person name="Collins M."/>
            <person name="Cronin A."/>
            <person name="Davis P."/>
            <person name="Doggett J."/>
            <person name="Feltwell T."/>
            <person name="Goble A."/>
            <person name="Hamlin N."/>
            <person name="Hauser H."/>
            <person name="Holroyd S."/>
            <person name="Jagels K."/>
            <person name="Leather S."/>
            <person name="Moule S."/>
            <person name="Norberczak H."/>
            <person name="O'Neil S."/>
            <person name="Ormond D."/>
            <person name="Price C."/>
            <person name="Rabbinowitsch E."/>
            <person name="Rutter S."/>
            <person name="Sanders M."/>
            <person name="Saunders D."/>
            <person name="Seeger K."/>
            <person name="Sharp S."/>
            <person name="Simmonds M."/>
            <person name="Skelton J."/>
            <person name="Squares R."/>
            <person name="Squares S."/>
            <person name="Stevens K."/>
            <person name="Unwin L."/>
            <person name="Whitehead S."/>
            <person name="Barrell B.G."/>
            <person name="Maskell D.J."/>
        </authorList>
    </citation>
    <scope>NUCLEOTIDE SEQUENCE [LARGE SCALE GENOMIC DNA]</scope>
    <source>
        <strain>ATCC BAA-588 / NCTC 13252 / RB50</strain>
    </source>
</reference>
<proteinExistence type="inferred from homology"/>
<gene>
    <name evidence="2" type="primary">rimO</name>
    <name type="ordered locus">BB0254</name>
</gene>
<protein>
    <recommendedName>
        <fullName evidence="2">Ribosomal protein uS12 methylthiotransferase RimO</fullName>
        <shortName evidence="2">uS12 MTTase</shortName>
        <shortName evidence="2">uS12 methylthiotransferase</shortName>
        <ecNumber evidence="2">2.8.4.4</ecNumber>
    </recommendedName>
    <alternativeName>
        <fullName evidence="2">Ribosomal protein uS12 (aspartate-C(3))-methylthiotransferase</fullName>
    </alternativeName>
    <alternativeName>
        <fullName evidence="2">Ribosome maturation factor RimO</fullName>
    </alternativeName>
</protein>
<sequence length="439" mass="49012">MSSPKVGFVSLGRPKALVDSERILTQLRTEGYEVTPEYNDADVVVVNTCGFIDSAKAESLEAIGEAIAENGKVIVTGCMGVEESVIRQVHPSVLAVTGPQQYEEVVRAVHGVAPPRQDHNPYLDLVPPQGVKLTPRHYAYLKISEGCNHRCSFCIIPSMRGDLVSRPVGDVLSEAERLVRAGVKELLVISQDTSAYGVDIKYRSGFWNGRPVKTRMTELCAALSELGVWTRLHYVYPYPHVDEVIGLMADGKVLPYLDIPFQHASPRILRAMKRPAFEDKTLARIKRWREECPDLTLRSTFIVGFPGETEEDFQYLLDWMSEAQLDRVGCFQYSPVEGAPANTLDNPVPDEVKQERWERFMEHQQAISTARLSTRVGREIDVLIDSVDEEGAVGRSSADAPEIDGCVYVDSEQPLKAGDMVRVRVTDSDEYDLWGERIA</sequence>
<accession>Q7WQS2</accession>
<keyword id="KW-0004">4Fe-4S</keyword>
<keyword id="KW-0963">Cytoplasm</keyword>
<keyword id="KW-0408">Iron</keyword>
<keyword id="KW-0411">Iron-sulfur</keyword>
<keyword id="KW-0479">Metal-binding</keyword>
<keyword id="KW-0949">S-adenosyl-L-methionine</keyword>
<keyword id="KW-0808">Transferase</keyword>
<dbReference type="EC" id="2.8.4.4" evidence="2"/>
<dbReference type="EMBL" id="BX640437">
    <property type="protein sequence ID" value="CAE30752.1"/>
    <property type="molecule type" value="Genomic_DNA"/>
</dbReference>
<dbReference type="RefSeq" id="WP_010925747.1">
    <property type="nucleotide sequence ID" value="NC_002927.3"/>
</dbReference>
<dbReference type="SMR" id="Q7WQS2"/>
<dbReference type="KEGG" id="bbr:BB0254"/>
<dbReference type="eggNOG" id="COG0621">
    <property type="taxonomic scope" value="Bacteria"/>
</dbReference>
<dbReference type="HOGENOM" id="CLU_018697_0_0_4"/>
<dbReference type="Proteomes" id="UP000001027">
    <property type="component" value="Chromosome"/>
</dbReference>
<dbReference type="GO" id="GO:0005829">
    <property type="term" value="C:cytosol"/>
    <property type="evidence" value="ECO:0007669"/>
    <property type="project" value="TreeGrafter"/>
</dbReference>
<dbReference type="GO" id="GO:0051539">
    <property type="term" value="F:4 iron, 4 sulfur cluster binding"/>
    <property type="evidence" value="ECO:0007669"/>
    <property type="project" value="UniProtKB-UniRule"/>
</dbReference>
<dbReference type="GO" id="GO:0035599">
    <property type="term" value="F:aspartic acid methylthiotransferase activity"/>
    <property type="evidence" value="ECO:0007669"/>
    <property type="project" value="TreeGrafter"/>
</dbReference>
<dbReference type="GO" id="GO:0046872">
    <property type="term" value="F:metal ion binding"/>
    <property type="evidence" value="ECO:0007669"/>
    <property type="project" value="UniProtKB-KW"/>
</dbReference>
<dbReference type="GO" id="GO:0103039">
    <property type="term" value="F:protein methylthiotransferase activity"/>
    <property type="evidence" value="ECO:0007669"/>
    <property type="project" value="UniProtKB-EC"/>
</dbReference>
<dbReference type="GO" id="GO:0006400">
    <property type="term" value="P:tRNA modification"/>
    <property type="evidence" value="ECO:0007669"/>
    <property type="project" value="InterPro"/>
</dbReference>
<dbReference type="CDD" id="cd01335">
    <property type="entry name" value="Radical_SAM"/>
    <property type="match status" value="1"/>
</dbReference>
<dbReference type="FunFam" id="2.40.50.140:FF:000060">
    <property type="entry name" value="Ribosomal protein S12 methylthiotransferase RimO"/>
    <property type="match status" value="1"/>
</dbReference>
<dbReference type="FunFam" id="3.40.50.12160:FF:000002">
    <property type="entry name" value="Ribosomal protein S12 methylthiotransferase RimO"/>
    <property type="match status" value="1"/>
</dbReference>
<dbReference type="FunFam" id="3.80.30.20:FF:000001">
    <property type="entry name" value="tRNA-2-methylthio-N(6)-dimethylallyladenosine synthase 2"/>
    <property type="match status" value="1"/>
</dbReference>
<dbReference type="Gene3D" id="3.40.50.12160">
    <property type="entry name" value="Methylthiotransferase, N-terminal domain"/>
    <property type="match status" value="1"/>
</dbReference>
<dbReference type="Gene3D" id="2.40.50.140">
    <property type="entry name" value="Nucleic acid-binding proteins"/>
    <property type="match status" value="1"/>
</dbReference>
<dbReference type="Gene3D" id="3.80.30.20">
    <property type="entry name" value="tm_1862 like domain"/>
    <property type="match status" value="1"/>
</dbReference>
<dbReference type="HAMAP" id="MF_01865">
    <property type="entry name" value="MTTase_RimO"/>
    <property type="match status" value="1"/>
</dbReference>
<dbReference type="InterPro" id="IPR006638">
    <property type="entry name" value="Elp3/MiaA/NifB-like_rSAM"/>
</dbReference>
<dbReference type="InterPro" id="IPR005839">
    <property type="entry name" value="Methylthiotransferase"/>
</dbReference>
<dbReference type="InterPro" id="IPR020612">
    <property type="entry name" value="Methylthiotransferase_CS"/>
</dbReference>
<dbReference type="InterPro" id="IPR013848">
    <property type="entry name" value="Methylthiotransferase_N"/>
</dbReference>
<dbReference type="InterPro" id="IPR038135">
    <property type="entry name" value="Methylthiotransferase_N_sf"/>
</dbReference>
<dbReference type="InterPro" id="IPR012340">
    <property type="entry name" value="NA-bd_OB-fold"/>
</dbReference>
<dbReference type="InterPro" id="IPR005840">
    <property type="entry name" value="Ribosomal_uS12_MeSTrfase_RimO"/>
</dbReference>
<dbReference type="InterPro" id="IPR007197">
    <property type="entry name" value="rSAM"/>
</dbReference>
<dbReference type="InterPro" id="IPR023404">
    <property type="entry name" value="rSAM_horseshoe"/>
</dbReference>
<dbReference type="InterPro" id="IPR002792">
    <property type="entry name" value="TRAM_dom"/>
</dbReference>
<dbReference type="NCBIfam" id="TIGR01125">
    <property type="entry name" value="30S ribosomal protein S12 methylthiotransferase RimO"/>
    <property type="match status" value="1"/>
</dbReference>
<dbReference type="NCBIfam" id="TIGR00089">
    <property type="entry name" value="MiaB/RimO family radical SAM methylthiotransferase"/>
    <property type="match status" value="1"/>
</dbReference>
<dbReference type="PANTHER" id="PTHR43837">
    <property type="entry name" value="RIBOSOMAL PROTEIN S12 METHYLTHIOTRANSFERASE RIMO"/>
    <property type="match status" value="1"/>
</dbReference>
<dbReference type="PANTHER" id="PTHR43837:SF1">
    <property type="entry name" value="RIBOSOMAL PROTEIN US12 METHYLTHIOTRANSFERASE RIMO"/>
    <property type="match status" value="1"/>
</dbReference>
<dbReference type="Pfam" id="PF04055">
    <property type="entry name" value="Radical_SAM"/>
    <property type="match status" value="1"/>
</dbReference>
<dbReference type="Pfam" id="PF18693">
    <property type="entry name" value="TRAM_2"/>
    <property type="match status" value="1"/>
</dbReference>
<dbReference type="Pfam" id="PF00919">
    <property type="entry name" value="UPF0004"/>
    <property type="match status" value="1"/>
</dbReference>
<dbReference type="SFLD" id="SFLDG01082">
    <property type="entry name" value="B12-binding_domain_containing"/>
    <property type="match status" value="1"/>
</dbReference>
<dbReference type="SFLD" id="SFLDG01061">
    <property type="entry name" value="methylthiotransferase"/>
    <property type="match status" value="1"/>
</dbReference>
<dbReference type="SFLD" id="SFLDS00029">
    <property type="entry name" value="Radical_SAM"/>
    <property type="match status" value="1"/>
</dbReference>
<dbReference type="SMART" id="SM00729">
    <property type="entry name" value="Elp3"/>
    <property type="match status" value="1"/>
</dbReference>
<dbReference type="SUPFAM" id="SSF102114">
    <property type="entry name" value="Radical SAM enzymes"/>
    <property type="match status" value="1"/>
</dbReference>
<dbReference type="PROSITE" id="PS51449">
    <property type="entry name" value="MTTASE_N"/>
    <property type="match status" value="1"/>
</dbReference>
<dbReference type="PROSITE" id="PS01278">
    <property type="entry name" value="MTTASE_RADICAL"/>
    <property type="match status" value="1"/>
</dbReference>
<dbReference type="PROSITE" id="PS51918">
    <property type="entry name" value="RADICAL_SAM"/>
    <property type="match status" value="1"/>
</dbReference>
<dbReference type="PROSITE" id="PS50926">
    <property type="entry name" value="TRAM"/>
    <property type="match status" value="1"/>
</dbReference>
<comment type="function">
    <text evidence="2">Catalyzes the methylthiolation of an aspartic acid residue of ribosomal protein uS12.</text>
</comment>
<comment type="catalytic activity">
    <reaction evidence="2">
        <text>L-aspartate(89)-[ribosomal protein uS12]-hydrogen + (sulfur carrier)-SH + AH2 + 2 S-adenosyl-L-methionine = 3-methylsulfanyl-L-aspartate(89)-[ribosomal protein uS12]-hydrogen + (sulfur carrier)-H + 5'-deoxyadenosine + L-methionine + A + S-adenosyl-L-homocysteine + 2 H(+)</text>
        <dbReference type="Rhea" id="RHEA:37087"/>
        <dbReference type="Rhea" id="RHEA-COMP:10460"/>
        <dbReference type="Rhea" id="RHEA-COMP:10461"/>
        <dbReference type="Rhea" id="RHEA-COMP:14737"/>
        <dbReference type="Rhea" id="RHEA-COMP:14739"/>
        <dbReference type="ChEBI" id="CHEBI:13193"/>
        <dbReference type="ChEBI" id="CHEBI:15378"/>
        <dbReference type="ChEBI" id="CHEBI:17319"/>
        <dbReference type="ChEBI" id="CHEBI:17499"/>
        <dbReference type="ChEBI" id="CHEBI:29917"/>
        <dbReference type="ChEBI" id="CHEBI:29961"/>
        <dbReference type="ChEBI" id="CHEBI:57844"/>
        <dbReference type="ChEBI" id="CHEBI:57856"/>
        <dbReference type="ChEBI" id="CHEBI:59789"/>
        <dbReference type="ChEBI" id="CHEBI:64428"/>
        <dbReference type="ChEBI" id="CHEBI:73599"/>
        <dbReference type="EC" id="2.8.4.4"/>
    </reaction>
</comment>
<comment type="cofactor">
    <cofactor evidence="1">
        <name>[4Fe-4S] cluster</name>
        <dbReference type="ChEBI" id="CHEBI:49883"/>
    </cofactor>
    <text evidence="1">Binds 1 [4Fe-4S] cluster, which is coordinated with 3 cysteines and an exchangeable S-adenosyl-L-methionine.</text>
</comment>
<comment type="subcellular location">
    <subcellularLocation>
        <location evidence="2">Cytoplasm</location>
    </subcellularLocation>
</comment>
<comment type="similarity">
    <text evidence="2">Belongs to the methylthiotransferase family. RimO subfamily.</text>
</comment>
<evidence type="ECO:0000250" key="1"/>
<evidence type="ECO:0000255" key="2">
    <source>
        <dbReference type="HAMAP-Rule" id="MF_01865"/>
    </source>
</evidence>
<evidence type="ECO:0000255" key="3">
    <source>
        <dbReference type="PROSITE-ProRule" id="PRU01266"/>
    </source>
</evidence>